<protein>
    <recommendedName>
        <fullName evidence="1">Lysine--tRNA ligase</fullName>
        <ecNumber evidence="1">6.1.1.6</ecNumber>
    </recommendedName>
    <alternativeName>
        <fullName evidence="1">Lysyl-tRNA synthetase</fullName>
        <shortName evidence="1">LysRS</shortName>
    </alternativeName>
</protein>
<sequence>MTEPTQPNAAPQNAVELDDNQIIAERREKLRALREQGVAYPNDFRPTHHAADLQTEYADADKDALETKALHVALAGRMMLKRVMGKASFATVRDGSGQIQFFITPADVGEATYEAFKKWDLGDIVAAKGVLFRTNKGELSVRCTELRLLSKALRPLPDKFHGLADQEMRYRQRYVDLIVTDEARKTFVARTKAVSSIRKFMAEADFMEVETPMLHPIPGGAAAKPFVTHHNALDMQMFLRIAPELYLKRLVVGGFERVFEINRNFRNEGVSPRHNPEFTMMEFYAAYTDYKWLMDFTEQLIRQAAVDALGNAAITYQGRELDLSKPFHRLTITQAIQKYAPQYSDAQLADGAFLRTELKKFGVDATQPAFLNAGIGALQLALFEETAESQLWEPTFIIDYPIEVSPLARASDSVDGITERFELFITGREIANGFSELNDPEDQAARFKKQVDQKDAGDEEAMYYDADYIRALEYGMPPAGGCGIGIDRLVMLLTDSPSIRDVILFPHLRRED</sequence>
<comment type="catalytic activity">
    <reaction evidence="1">
        <text>tRNA(Lys) + L-lysine + ATP = L-lysyl-tRNA(Lys) + AMP + diphosphate</text>
        <dbReference type="Rhea" id="RHEA:20792"/>
        <dbReference type="Rhea" id="RHEA-COMP:9696"/>
        <dbReference type="Rhea" id="RHEA-COMP:9697"/>
        <dbReference type="ChEBI" id="CHEBI:30616"/>
        <dbReference type="ChEBI" id="CHEBI:32551"/>
        <dbReference type="ChEBI" id="CHEBI:33019"/>
        <dbReference type="ChEBI" id="CHEBI:78442"/>
        <dbReference type="ChEBI" id="CHEBI:78529"/>
        <dbReference type="ChEBI" id="CHEBI:456215"/>
        <dbReference type="EC" id="6.1.1.6"/>
    </reaction>
</comment>
<comment type="cofactor">
    <cofactor evidence="1">
        <name>Mg(2+)</name>
        <dbReference type="ChEBI" id="CHEBI:18420"/>
    </cofactor>
    <text evidence="1">Binds 3 Mg(2+) ions per subunit.</text>
</comment>
<comment type="subunit">
    <text evidence="1">Homodimer.</text>
</comment>
<comment type="subcellular location">
    <subcellularLocation>
        <location evidence="1">Cytoplasm</location>
    </subcellularLocation>
</comment>
<comment type="similarity">
    <text evidence="1">Belongs to the class-II aminoacyl-tRNA synthetase family.</text>
</comment>
<gene>
    <name evidence="1" type="primary">lysS</name>
    <name type="ordered locus">Bphy_1450</name>
</gene>
<reference key="1">
    <citation type="journal article" date="2014" name="Stand. Genomic Sci.">
        <title>Complete genome sequence of Burkholderia phymatum STM815(T), a broad host range and efficient nitrogen-fixing symbiont of Mimosa species.</title>
        <authorList>
            <person name="Moulin L."/>
            <person name="Klonowska A."/>
            <person name="Caroline B."/>
            <person name="Booth K."/>
            <person name="Vriezen J.A."/>
            <person name="Melkonian R."/>
            <person name="James E.K."/>
            <person name="Young J.P."/>
            <person name="Bena G."/>
            <person name="Hauser L."/>
            <person name="Land M."/>
            <person name="Kyrpides N."/>
            <person name="Bruce D."/>
            <person name="Chain P."/>
            <person name="Copeland A."/>
            <person name="Pitluck S."/>
            <person name="Woyke T."/>
            <person name="Lizotte-Waniewski M."/>
            <person name="Bristow J."/>
            <person name="Riley M."/>
        </authorList>
    </citation>
    <scope>NUCLEOTIDE SEQUENCE [LARGE SCALE GENOMIC DNA]</scope>
    <source>
        <strain>DSM 17167 / CIP 108236 / LMG 21445 / STM815</strain>
    </source>
</reference>
<name>SYK_PARP8</name>
<organism>
    <name type="scientific">Paraburkholderia phymatum (strain DSM 17167 / CIP 108236 / LMG 21445 / STM815)</name>
    <name type="common">Burkholderia phymatum</name>
    <dbReference type="NCBI Taxonomy" id="391038"/>
    <lineage>
        <taxon>Bacteria</taxon>
        <taxon>Pseudomonadati</taxon>
        <taxon>Pseudomonadota</taxon>
        <taxon>Betaproteobacteria</taxon>
        <taxon>Burkholderiales</taxon>
        <taxon>Burkholderiaceae</taxon>
        <taxon>Paraburkholderia</taxon>
    </lineage>
</organism>
<feature type="chain" id="PRO_1000101103" description="Lysine--tRNA ligase">
    <location>
        <begin position="1"/>
        <end position="512"/>
    </location>
</feature>
<feature type="binding site" evidence="1">
    <location>
        <position position="422"/>
    </location>
    <ligand>
        <name>Mg(2+)</name>
        <dbReference type="ChEBI" id="CHEBI:18420"/>
        <label>1</label>
    </ligand>
</feature>
<feature type="binding site" evidence="1">
    <location>
        <position position="429"/>
    </location>
    <ligand>
        <name>Mg(2+)</name>
        <dbReference type="ChEBI" id="CHEBI:18420"/>
        <label>1</label>
    </ligand>
</feature>
<feature type="binding site" evidence="1">
    <location>
        <position position="429"/>
    </location>
    <ligand>
        <name>Mg(2+)</name>
        <dbReference type="ChEBI" id="CHEBI:18420"/>
        <label>2</label>
    </ligand>
</feature>
<dbReference type="EC" id="6.1.1.6" evidence="1"/>
<dbReference type="EMBL" id="CP001043">
    <property type="protein sequence ID" value="ACC70632.1"/>
    <property type="molecule type" value="Genomic_DNA"/>
</dbReference>
<dbReference type="RefSeq" id="WP_012400845.1">
    <property type="nucleotide sequence ID" value="NC_010622.1"/>
</dbReference>
<dbReference type="SMR" id="B2JIY1"/>
<dbReference type="STRING" id="391038.Bphy_1450"/>
<dbReference type="KEGG" id="bph:Bphy_1450"/>
<dbReference type="eggNOG" id="COG1190">
    <property type="taxonomic scope" value="Bacteria"/>
</dbReference>
<dbReference type="HOGENOM" id="CLU_008255_6_0_4"/>
<dbReference type="OrthoDB" id="9801152at2"/>
<dbReference type="Proteomes" id="UP000001192">
    <property type="component" value="Chromosome 1"/>
</dbReference>
<dbReference type="GO" id="GO:0005829">
    <property type="term" value="C:cytosol"/>
    <property type="evidence" value="ECO:0007669"/>
    <property type="project" value="TreeGrafter"/>
</dbReference>
<dbReference type="GO" id="GO:0005524">
    <property type="term" value="F:ATP binding"/>
    <property type="evidence" value="ECO:0007669"/>
    <property type="project" value="UniProtKB-UniRule"/>
</dbReference>
<dbReference type="GO" id="GO:0004824">
    <property type="term" value="F:lysine-tRNA ligase activity"/>
    <property type="evidence" value="ECO:0007669"/>
    <property type="project" value="UniProtKB-UniRule"/>
</dbReference>
<dbReference type="GO" id="GO:0000287">
    <property type="term" value="F:magnesium ion binding"/>
    <property type="evidence" value="ECO:0007669"/>
    <property type="project" value="UniProtKB-UniRule"/>
</dbReference>
<dbReference type="GO" id="GO:0000049">
    <property type="term" value="F:tRNA binding"/>
    <property type="evidence" value="ECO:0007669"/>
    <property type="project" value="TreeGrafter"/>
</dbReference>
<dbReference type="GO" id="GO:0006430">
    <property type="term" value="P:lysyl-tRNA aminoacylation"/>
    <property type="evidence" value="ECO:0007669"/>
    <property type="project" value="UniProtKB-UniRule"/>
</dbReference>
<dbReference type="CDD" id="cd00775">
    <property type="entry name" value="LysRS_core"/>
    <property type="match status" value="1"/>
</dbReference>
<dbReference type="CDD" id="cd04322">
    <property type="entry name" value="LysRS_N"/>
    <property type="match status" value="1"/>
</dbReference>
<dbReference type="FunFam" id="2.40.50.140:FF:000024">
    <property type="entry name" value="Lysine--tRNA ligase"/>
    <property type="match status" value="1"/>
</dbReference>
<dbReference type="FunFam" id="3.30.930.10:FF:000001">
    <property type="entry name" value="Lysine--tRNA ligase"/>
    <property type="match status" value="1"/>
</dbReference>
<dbReference type="Gene3D" id="3.30.930.10">
    <property type="entry name" value="Bira Bifunctional Protein, Domain 2"/>
    <property type="match status" value="1"/>
</dbReference>
<dbReference type="Gene3D" id="2.40.50.140">
    <property type="entry name" value="Nucleic acid-binding proteins"/>
    <property type="match status" value="1"/>
</dbReference>
<dbReference type="HAMAP" id="MF_00252">
    <property type="entry name" value="Lys_tRNA_synth_class2"/>
    <property type="match status" value="1"/>
</dbReference>
<dbReference type="InterPro" id="IPR004364">
    <property type="entry name" value="Aa-tRNA-synt_II"/>
</dbReference>
<dbReference type="InterPro" id="IPR006195">
    <property type="entry name" value="aa-tRNA-synth_II"/>
</dbReference>
<dbReference type="InterPro" id="IPR045864">
    <property type="entry name" value="aa-tRNA-synth_II/BPL/LPL"/>
</dbReference>
<dbReference type="InterPro" id="IPR002313">
    <property type="entry name" value="Lys-tRNA-ligase_II"/>
</dbReference>
<dbReference type="InterPro" id="IPR044136">
    <property type="entry name" value="Lys-tRNA-ligase_II_N"/>
</dbReference>
<dbReference type="InterPro" id="IPR018149">
    <property type="entry name" value="Lys-tRNA-synth_II_C"/>
</dbReference>
<dbReference type="InterPro" id="IPR012340">
    <property type="entry name" value="NA-bd_OB-fold"/>
</dbReference>
<dbReference type="InterPro" id="IPR004365">
    <property type="entry name" value="NA-bd_OB_tRNA"/>
</dbReference>
<dbReference type="NCBIfam" id="TIGR00499">
    <property type="entry name" value="lysS_bact"/>
    <property type="match status" value="1"/>
</dbReference>
<dbReference type="NCBIfam" id="NF001756">
    <property type="entry name" value="PRK00484.1"/>
    <property type="match status" value="1"/>
</dbReference>
<dbReference type="PANTHER" id="PTHR42918:SF15">
    <property type="entry name" value="LYSINE--TRNA LIGASE, CHLOROPLASTIC_MITOCHONDRIAL"/>
    <property type="match status" value="1"/>
</dbReference>
<dbReference type="PANTHER" id="PTHR42918">
    <property type="entry name" value="LYSYL-TRNA SYNTHETASE"/>
    <property type="match status" value="1"/>
</dbReference>
<dbReference type="Pfam" id="PF00152">
    <property type="entry name" value="tRNA-synt_2"/>
    <property type="match status" value="1"/>
</dbReference>
<dbReference type="Pfam" id="PF01336">
    <property type="entry name" value="tRNA_anti-codon"/>
    <property type="match status" value="1"/>
</dbReference>
<dbReference type="PRINTS" id="PR00982">
    <property type="entry name" value="TRNASYNTHLYS"/>
</dbReference>
<dbReference type="SUPFAM" id="SSF55681">
    <property type="entry name" value="Class II aaRS and biotin synthetases"/>
    <property type="match status" value="1"/>
</dbReference>
<dbReference type="SUPFAM" id="SSF50249">
    <property type="entry name" value="Nucleic acid-binding proteins"/>
    <property type="match status" value="1"/>
</dbReference>
<dbReference type="PROSITE" id="PS50862">
    <property type="entry name" value="AA_TRNA_LIGASE_II"/>
    <property type="match status" value="1"/>
</dbReference>
<accession>B2JIY1</accession>
<keyword id="KW-0030">Aminoacyl-tRNA synthetase</keyword>
<keyword id="KW-0067">ATP-binding</keyword>
<keyword id="KW-0963">Cytoplasm</keyword>
<keyword id="KW-0436">Ligase</keyword>
<keyword id="KW-0460">Magnesium</keyword>
<keyword id="KW-0479">Metal-binding</keyword>
<keyword id="KW-0547">Nucleotide-binding</keyword>
<keyword id="KW-0648">Protein biosynthesis</keyword>
<keyword id="KW-1185">Reference proteome</keyword>
<evidence type="ECO:0000255" key="1">
    <source>
        <dbReference type="HAMAP-Rule" id="MF_00252"/>
    </source>
</evidence>
<proteinExistence type="inferred from homology"/>